<evidence type="ECO:0000250" key="1">
    <source>
        <dbReference type="UniProtKB" id="Q941L0"/>
    </source>
</evidence>
<evidence type="ECO:0000250" key="2">
    <source>
        <dbReference type="UniProtKB" id="Q9SWW6"/>
    </source>
</evidence>
<evidence type="ECO:0000255" key="3"/>
<evidence type="ECO:0000255" key="4">
    <source>
        <dbReference type="PROSITE-ProRule" id="PRU00498"/>
    </source>
</evidence>
<evidence type="ECO:0000256" key="5">
    <source>
        <dbReference type="SAM" id="MobiDB-lite"/>
    </source>
</evidence>
<evidence type="ECO:0000269" key="6">
    <source>
    </source>
</evidence>
<evidence type="ECO:0000269" key="7">
    <source>
    </source>
</evidence>
<evidence type="ECO:0000305" key="8"/>
<keyword id="KW-1003">Cell membrane</keyword>
<keyword id="KW-0961">Cell wall biogenesis/degradation</keyword>
<keyword id="KW-0135">Cellulose biosynthesis</keyword>
<keyword id="KW-0175">Coiled coil</keyword>
<keyword id="KW-0325">Glycoprotein</keyword>
<keyword id="KW-0328">Glycosyltransferase</keyword>
<keyword id="KW-0464">Manganese</keyword>
<keyword id="KW-0472">Membrane</keyword>
<keyword id="KW-0479">Metal-binding</keyword>
<keyword id="KW-1185">Reference proteome</keyword>
<keyword id="KW-0808">Transferase</keyword>
<keyword id="KW-0812">Transmembrane</keyword>
<keyword id="KW-1133">Transmembrane helix</keyword>
<keyword id="KW-0862">Zinc</keyword>
<keyword id="KW-0863">Zinc-finger</keyword>
<dbReference type="EC" id="2.4.1.12" evidence="8"/>
<dbReference type="EMBL" id="CM000126">
    <property type="protein sequence ID" value="EEC71479.1"/>
    <property type="molecule type" value="Genomic_DNA"/>
</dbReference>
<dbReference type="EMBL" id="EF576384">
    <property type="protein sequence ID" value="ABR25972.1"/>
    <property type="molecule type" value="mRNA"/>
</dbReference>
<dbReference type="SMR" id="A2WV32"/>
<dbReference type="STRING" id="39946.A2WV32"/>
<dbReference type="CAZy" id="GT2">
    <property type="family name" value="Glycosyltransferase Family 2"/>
</dbReference>
<dbReference type="GlyCosmos" id="A2WV32">
    <property type="glycosylation" value="1 site, No reported glycans"/>
</dbReference>
<dbReference type="EnsemblPlants" id="BGIOSGA004463-TA">
    <property type="protein sequence ID" value="BGIOSGA004463-PA"/>
    <property type="gene ID" value="BGIOSGA004463"/>
</dbReference>
<dbReference type="EnsemblPlants" id="OsGoSa_01g0032870.01">
    <property type="protein sequence ID" value="OsGoSa_01g0032870.01"/>
    <property type="gene ID" value="OsGoSa_01g0032870"/>
</dbReference>
<dbReference type="EnsemblPlants" id="OsIR64_01g0032390.01">
    <property type="protein sequence ID" value="OsIR64_01g0032390.01"/>
    <property type="gene ID" value="OsIR64_01g0032390"/>
</dbReference>
<dbReference type="EnsemblPlants" id="OsKYG_01g0032630.01">
    <property type="protein sequence ID" value="OsKYG_01g0032630.01"/>
    <property type="gene ID" value="OsKYG_01g0032630"/>
</dbReference>
<dbReference type="EnsemblPlants" id="OsLaMu_01g0032760.01">
    <property type="protein sequence ID" value="OsLaMu_01g0032760.01"/>
    <property type="gene ID" value="OsLaMu_01g0032760"/>
</dbReference>
<dbReference type="EnsemblPlants" id="OsLima_01g0032570.01">
    <property type="protein sequence ID" value="OsLima_01g0032570.01"/>
    <property type="gene ID" value="OsLima_01g0032570"/>
</dbReference>
<dbReference type="EnsemblPlants" id="OsLiXu_01g0032970.01">
    <property type="protein sequence ID" value="OsLiXu_01g0032970.01"/>
    <property type="gene ID" value="OsLiXu_01g0032970"/>
</dbReference>
<dbReference type="EnsemblPlants" id="OsMH63_01G033420_01">
    <property type="protein sequence ID" value="OsMH63_01G033420_01"/>
    <property type="gene ID" value="OsMH63_01G033420"/>
</dbReference>
<dbReference type="EnsemblPlants" id="OsPr106_01g0032680.01">
    <property type="protein sequence ID" value="OsPr106_01g0032680.01"/>
    <property type="gene ID" value="OsPr106_01g0032680"/>
</dbReference>
<dbReference type="Gramene" id="BGIOSGA004463-TA">
    <property type="protein sequence ID" value="BGIOSGA004463-PA"/>
    <property type="gene ID" value="BGIOSGA004463"/>
</dbReference>
<dbReference type="Gramene" id="OsGoSa_01g0032870.01">
    <property type="protein sequence ID" value="OsGoSa_01g0032870.01"/>
    <property type="gene ID" value="OsGoSa_01g0032870"/>
</dbReference>
<dbReference type="Gramene" id="OsIR64_01g0032390.01">
    <property type="protein sequence ID" value="OsIR64_01g0032390.01"/>
    <property type="gene ID" value="OsIR64_01g0032390"/>
</dbReference>
<dbReference type="Gramene" id="OsKYG_01g0032630.01">
    <property type="protein sequence ID" value="OsKYG_01g0032630.01"/>
    <property type="gene ID" value="OsKYG_01g0032630"/>
</dbReference>
<dbReference type="Gramene" id="OsLaMu_01g0032760.01">
    <property type="protein sequence ID" value="OsLaMu_01g0032760.01"/>
    <property type="gene ID" value="OsLaMu_01g0032760"/>
</dbReference>
<dbReference type="Gramene" id="OsLima_01g0032570.01">
    <property type="protein sequence ID" value="OsLima_01g0032570.01"/>
    <property type="gene ID" value="OsLima_01g0032570"/>
</dbReference>
<dbReference type="Gramene" id="OsLiXu_01g0032970.01">
    <property type="protein sequence ID" value="OsLiXu_01g0032970.01"/>
    <property type="gene ID" value="OsLiXu_01g0032970"/>
</dbReference>
<dbReference type="Gramene" id="OsMH63_01G033420_01">
    <property type="protein sequence ID" value="OsMH63_01G033420_01"/>
    <property type="gene ID" value="OsMH63_01G033420"/>
</dbReference>
<dbReference type="Gramene" id="OsPr106_01g0032680.01">
    <property type="protein sequence ID" value="OsPr106_01g0032680.01"/>
    <property type="gene ID" value="OsPr106_01g0032680"/>
</dbReference>
<dbReference type="HOGENOM" id="CLU_001418_0_0_1"/>
<dbReference type="OMA" id="CATPYDE"/>
<dbReference type="OrthoDB" id="2161379at2759"/>
<dbReference type="UniPathway" id="UPA00695"/>
<dbReference type="Proteomes" id="UP000007015">
    <property type="component" value="Chromosome 1"/>
</dbReference>
<dbReference type="GO" id="GO:0005886">
    <property type="term" value="C:plasma membrane"/>
    <property type="evidence" value="ECO:0007669"/>
    <property type="project" value="UniProtKB-SubCell"/>
</dbReference>
<dbReference type="GO" id="GO:0016760">
    <property type="term" value="F:cellulose synthase (UDP-forming) activity"/>
    <property type="evidence" value="ECO:0007669"/>
    <property type="project" value="UniProtKB-EC"/>
</dbReference>
<dbReference type="GO" id="GO:0008270">
    <property type="term" value="F:zinc ion binding"/>
    <property type="evidence" value="ECO:0007669"/>
    <property type="project" value="UniProtKB-KW"/>
</dbReference>
<dbReference type="GO" id="GO:0071555">
    <property type="term" value="P:cell wall organization"/>
    <property type="evidence" value="ECO:0007669"/>
    <property type="project" value="UniProtKB-KW"/>
</dbReference>
<dbReference type="GO" id="GO:0030244">
    <property type="term" value="P:cellulose biosynthetic process"/>
    <property type="evidence" value="ECO:0000315"/>
    <property type="project" value="UniProtKB"/>
</dbReference>
<dbReference type="GO" id="GO:0009834">
    <property type="term" value="P:plant-type secondary cell wall biogenesis"/>
    <property type="evidence" value="ECO:0000315"/>
    <property type="project" value="UniProtKB"/>
</dbReference>
<dbReference type="FunFam" id="3.90.550.10:FF:000009">
    <property type="entry name" value="Cellulose synthase"/>
    <property type="match status" value="1"/>
</dbReference>
<dbReference type="Gene3D" id="3.90.550.10">
    <property type="entry name" value="Spore Coat Polysaccharide Biosynthesis Protein SpsA, Chain A"/>
    <property type="match status" value="1"/>
</dbReference>
<dbReference type="InterPro" id="IPR005150">
    <property type="entry name" value="Cellulose_synth"/>
</dbReference>
<dbReference type="InterPro" id="IPR029044">
    <property type="entry name" value="Nucleotide-diphossugar_trans"/>
</dbReference>
<dbReference type="PANTHER" id="PTHR13301">
    <property type="entry name" value="X-BOX TRANSCRIPTION FACTOR-RELATED"/>
    <property type="match status" value="1"/>
</dbReference>
<dbReference type="Pfam" id="PF03552">
    <property type="entry name" value="Cellulose_synt"/>
    <property type="match status" value="1"/>
</dbReference>
<dbReference type="SUPFAM" id="SSF53448">
    <property type="entry name" value="Nucleotide-diphospho-sugar transferases"/>
    <property type="match status" value="1"/>
</dbReference>
<dbReference type="SUPFAM" id="SSF57850">
    <property type="entry name" value="RING/U-box"/>
    <property type="match status" value="1"/>
</dbReference>
<sequence length="989" mass="111085">MMESGVPPCAACGDDAHAACRACSYALCKACLDEDAAEGRTTCARCGGEYGAPDPAHGQGAVVEEEVEESHEPVASGVRERVTMASQLSDHQDEGVHARTMSTHARTISSVSGVGSELNDESGKPIWKNRVESWKEKKKEKKASAKKAAAKAQAPPVEEQIMDEKDLTDAYEPLSRIIPISKNKLTPYRAVIIMRLVVLGLFFHYRITNPVYSAFGLWMTSVICEIWFGFSWILDQFPKWCPINRETYVDRLIARYGDGEDSGLAPVDFFVSTVDPLKEPPLITANTVLSILAVDYPVEKISCYVSDDGSAMLTFESLAETAEFARRWVPFCKKYSIEPRAPEFYFSQKIDYLKDKIHPSFVKERRAMKRDYEEYKVRINALVAKAQKTPEEGWIMQDGTPWPGNNPRDHPGMIQVFLGETGARDFDGNELPRLVYVSREKRPGYQHHKKAGAMNALVRVSAVLTNAPYILNLDCDHYVNNSKAVREAMCFMMDPSVGRDVCYVQFPQRFDGIDRSDRYANRNVVFFDVNMKGLDGLQGPVYVGTGCCFYRQALYGYGPPSLPALPKSSVCSWCCCCCPKKKAEKSEKEMHRDSRREDLESAIFNLREIDNYDEYERSMLISQMSFEKSFGLSSVFIESTLMENGGVPESANPSTLIKEAIHVISCGYEEKTEWGKEIGWIYGSVTEDILTGFKMHCRGWRSIYCMPIRPAFKGSAPINLSDRLHQVLRWALGSVEIFLSRHCPLWYGYGGGRLKWLQRLSYINTIVYPFTSLPLIAYCCLPAICLLTGKFIIPTLSNAATIWFLGLFISIIVTSVLELRWSGIGIEDWWRNEQFWVIGGVSAHLFAVFQGILKMIAGLDTNFTVTAKATDDTEFGELYVFKWTTVLIPPTSILVLNLVGVVAGFSDALNSGYESWGPLFGKVFFAMWVIMHLYPFLKGLMGRQNRTPTIVVLWSVLLASVFSLLWVKIDPFIGSSETTTTNSCANFDC</sequence>
<reference key="1">
    <citation type="journal article" date="2005" name="PLoS Biol.">
        <title>The genomes of Oryza sativa: a history of duplications.</title>
        <authorList>
            <person name="Yu J."/>
            <person name="Wang J."/>
            <person name="Lin W."/>
            <person name="Li S."/>
            <person name="Li H."/>
            <person name="Zhou J."/>
            <person name="Ni P."/>
            <person name="Dong W."/>
            <person name="Hu S."/>
            <person name="Zeng C."/>
            <person name="Zhang J."/>
            <person name="Zhang Y."/>
            <person name="Li R."/>
            <person name="Xu Z."/>
            <person name="Li S."/>
            <person name="Li X."/>
            <person name="Zheng H."/>
            <person name="Cong L."/>
            <person name="Lin L."/>
            <person name="Yin J."/>
            <person name="Geng J."/>
            <person name="Li G."/>
            <person name="Shi J."/>
            <person name="Liu J."/>
            <person name="Lv H."/>
            <person name="Li J."/>
            <person name="Wang J."/>
            <person name="Deng Y."/>
            <person name="Ran L."/>
            <person name="Shi X."/>
            <person name="Wang X."/>
            <person name="Wu Q."/>
            <person name="Li C."/>
            <person name="Ren X."/>
            <person name="Wang J."/>
            <person name="Wang X."/>
            <person name="Li D."/>
            <person name="Liu D."/>
            <person name="Zhang X."/>
            <person name="Ji Z."/>
            <person name="Zhao W."/>
            <person name="Sun Y."/>
            <person name="Zhang Z."/>
            <person name="Bao J."/>
            <person name="Han Y."/>
            <person name="Dong L."/>
            <person name="Ji J."/>
            <person name="Chen P."/>
            <person name="Wu S."/>
            <person name="Liu J."/>
            <person name="Xiao Y."/>
            <person name="Bu D."/>
            <person name="Tan J."/>
            <person name="Yang L."/>
            <person name="Ye C."/>
            <person name="Zhang J."/>
            <person name="Xu J."/>
            <person name="Zhou Y."/>
            <person name="Yu Y."/>
            <person name="Zhang B."/>
            <person name="Zhuang S."/>
            <person name="Wei H."/>
            <person name="Liu B."/>
            <person name="Lei M."/>
            <person name="Yu H."/>
            <person name="Li Y."/>
            <person name="Xu H."/>
            <person name="Wei S."/>
            <person name="He X."/>
            <person name="Fang L."/>
            <person name="Zhang Z."/>
            <person name="Zhang Y."/>
            <person name="Huang X."/>
            <person name="Su Z."/>
            <person name="Tong W."/>
            <person name="Li J."/>
            <person name="Tong Z."/>
            <person name="Li S."/>
            <person name="Ye J."/>
            <person name="Wang L."/>
            <person name="Fang L."/>
            <person name="Lei T."/>
            <person name="Chen C.-S."/>
            <person name="Chen H.-C."/>
            <person name="Xu Z."/>
            <person name="Li H."/>
            <person name="Huang H."/>
            <person name="Zhang F."/>
            <person name="Xu H."/>
            <person name="Li N."/>
            <person name="Zhao C."/>
            <person name="Li S."/>
            <person name="Dong L."/>
            <person name="Huang Y."/>
            <person name="Li L."/>
            <person name="Xi Y."/>
            <person name="Qi Q."/>
            <person name="Li W."/>
            <person name="Zhang B."/>
            <person name="Hu W."/>
            <person name="Zhang Y."/>
            <person name="Tian X."/>
            <person name="Jiao Y."/>
            <person name="Liang X."/>
            <person name="Jin J."/>
            <person name="Gao L."/>
            <person name="Zheng W."/>
            <person name="Hao B."/>
            <person name="Liu S.-M."/>
            <person name="Wang W."/>
            <person name="Yuan L."/>
            <person name="Cao M."/>
            <person name="McDermott J."/>
            <person name="Samudrala R."/>
            <person name="Wang J."/>
            <person name="Wong G.K.-S."/>
            <person name="Yang H."/>
        </authorList>
    </citation>
    <scope>NUCLEOTIDE SEQUENCE [LARGE SCALE GENOMIC DNA]</scope>
    <source>
        <strain>cv. 93-11</strain>
    </source>
</reference>
<reference key="2">
    <citation type="submission" date="2007-04" db="EMBL/GenBank/DDBJ databases">
        <title>A comparative transcriptome map of early and late salinity stress responses in contrasting genotypes of Oryza sativa L.</title>
        <authorList>
            <person name="Kumari S."/>
            <person name="Panjabi V."/>
            <person name="Singla-Pareek S.L."/>
            <person name="Sopory S.K."/>
            <person name="Pareek A."/>
        </authorList>
    </citation>
    <scope>NUCLEOTIDE SEQUENCE [LARGE SCALE MRNA] OF 296-574</scope>
</reference>
<reference key="3">
    <citation type="journal article" date="2003" name="Plant Physiol.">
        <title>Three distinct rice cellulose synthase catalytic subunit genes required for cellulose synthesis in the secondary wall.</title>
        <authorList>
            <person name="Tanaka K."/>
            <person name="Murata K."/>
            <person name="Yamazaki M."/>
            <person name="Onosato K."/>
            <person name="Miyao A."/>
            <person name="Hirochika H."/>
        </authorList>
    </citation>
    <scope>FUNCTION</scope>
    <scope>DISRUPTION PHENOTYPE</scope>
    <scope>TISSUE SPECIFICITY</scope>
</reference>
<reference key="4">
    <citation type="journal article" date="2007" name="J. Genet. Genomics">
        <title>Fine mapping and isolation of Bc7(t), allelic to OsCesA4.</title>
        <authorList>
            <person name="Yan C."/>
            <person name="Yan S."/>
            <person name="Zeng X."/>
            <person name="Zhang Z."/>
            <person name="Gu M."/>
        </authorList>
    </citation>
    <scope>FUNCTION</scope>
    <scope>DISRUPTION PHENOTYPE</scope>
</reference>
<gene>
    <name type="primary">CESA4</name>
    <name type="ORF">OsI_03742</name>
</gene>
<name>CESA4_ORYSI</name>
<protein>
    <recommendedName>
        <fullName>Cellulose synthase A catalytic subunit 4 [UDP-forming]</fullName>
        <ecNumber evidence="8">2.4.1.12</ecNumber>
    </recommendedName>
    <alternativeName>
        <fullName>OsCesA4</fullName>
    </alternativeName>
</protein>
<comment type="function">
    <text evidence="2 6 7">Catalytic subunit of cellulose synthase terminal complexes ('rosettes'), required for beta-1,4-glucan microfibril crystallization, a major mechanism of the cell wall formation (By similarity). Involved in the secondary cell wall formation.</text>
</comment>
<comment type="catalytic activity">
    <reaction evidence="8">
        <text>[(1-&gt;4)-beta-D-glucosyl](n) + UDP-alpha-D-glucose = [(1-&gt;4)-beta-D-glucosyl](n+1) + UDP + H(+)</text>
        <dbReference type="Rhea" id="RHEA:19929"/>
        <dbReference type="Rhea" id="RHEA-COMP:10033"/>
        <dbReference type="Rhea" id="RHEA-COMP:10034"/>
        <dbReference type="ChEBI" id="CHEBI:15378"/>
        <dbReference type="ChEBI" id="CHEBI:18246"/>
        <dbReference type="ChEBI" id="CHEBI:58223"/>
        <dbReference type="ChEBI" id="CHEBI:58885"/>
        <dbReference type="EC" id="2.4.1.12"/>
    </reaction>
</comment>
<comment type="cofactor">
    <cofactor evidence="1">
        <name>Mn(2+)</name>
        <dbReference type="ChEBI" id="CHEBI:29035"/>
    </cofactor>
</comment>
<comment type="cofactor">
    <cofactor evidence="2">
        <name>Zn(2+)</name>
        <dbReference type="ChEBI" id="CHEBI:29105"/>
    </cofactor>
    <text evidence="2">Binds 2 Zn(2+) ions per subunit.</text>
</comment>
<comment type="pathway">
    <text>Glycan metabolism; plant cellulose biosynthesis.</text>
</comment>
<comment type="subcellular location">
    <subcellularLocation>
        <location evidence="8">Cell membrane</location>
        <topology evidence="8">Multi-pass membrane protein</topology>
    </subcellularLocation>
</comment>
<comment type="disruption phenotype">
    <text evidence="6 7">Plants develop a brittle culm (bc) phenotype with a reduction of up to 80 percent of cellulose content in culm.</text>
</comment>
<comment type="similarity">
    <text evidence="8">Belongs to the glycosyltransferase 2 family. Plant cellulose synthase subfamily.</text>
</comment>
<proteinExistence type="evidence at transcript level"/>
<accession>A2WV32</accession>
<accession>A6N152</accession>
<accession>B8A9F7</accession>
<feature type="chain" id="PRO_0000319362" description="Cellulose synthase A catalytic subunit 4 [UDP-forming]">
    <location>
        <begin position="1"/>
        <end position="989"/>
    </location>
</feature>
<feature type="topological domain" description="Cytoplasmic" evidence="3">
    <location>
        <begin position="1"/>
        <end position="184"/>
    </location>
</feature>
<feature type="transmembrane region" description="Helical" evidence="3">
    <location>
        <begin position="185"/>
        <end position="205"/>
    </location>
</feature>
<feature type="topological domain" description="Extracellular" evidence="3">
    <location>
        <begin position="206"/>
        <end position="213"/>
    </location>
</feature>
<feature type="transmembrane region" description="Helical" evidence="3">
    <location>
        <begin position="214"/>
        <end position="234"/>
    </location>
</feature>
<feature type="topological domain" description="Cytoplasmic" evidence="3">
    <location>
        <begin position="235"/>
        <end position="772"/>
    </location>
</feature>
<feature type="transmembrane region" description="Helical" evidence="3">
    <location>
        <begin position="773"/>
        <end position="793"/>
    </location>
</feature>
<feature type="topological domain" description="Extracellular" evidence="3">
    <location>
        <begin position="794"/>
        <end position="798"/>
    </location>
</feature>
<feature type="transmembrane region" description="Helical" evidence="3">
    <location>
        <begin position="799"/>
        <end position="819"/>
    </location>
</feature>
<feature type="topological domain" description="Cytoplasmic" evidence="3">
    <location>
        <begin position="820"/>
        <end position="835"/>
    </location>
</feature>
<feature type="transmembrane region" description="Helical" evidence="3">
    <location>
        <begin position="836"/>
        <end position="856"/>
    </location>
</feature>
<feature type="topological domain" description="Extracellular" evidence="3">
    <location>
        <begin position="857"/>
        <end position="884"/>
    </location>
</feature>
<feature type="transmembrane region" description="Helical" evidence="3">
    <location>
        <begin position="885"/>
        <end position="905"/>
    </location>
</feature>
<feature type="topological domain" description="Cytoplasmic" evidence="3">
    <location>
        <begin position="906"/>
        <end position="916"/>
    </location>
</feature>
<feature type="transmembrane region" description="Helical" evidence="3">
    <location>
        <begin position="917"/>
        <end position="937"/>
    </location>
</feature>
<feature type="topological domain" description="Extracellular" evidence="3">
    <location>
        <begin position="938"/>
        <end position="946"/>
    </location>
</feature>
<feature type="transmembrane region" description="Helical" evidence="3">
    <location>
        <begin position="947"/>
        <end position="967"/>
    </location>
</feature>
<feature type="topological domain" description="Cytoplasmic" evidence="3">
    <location>
        <begin position="968"/>
        <end position="989"/>
    </location>
</feature>
<feature type="zinc finger region" description="RING-type; degenerate">
    <location>
        <begin position="9"/>
        <end position="47"/>
    </location>
</feature>
<feature type="region of interest" description="Disordered" evidence="5">
    <location>
        <begin position="138"/>
        <end position="158"/>
    </location>
</feature>
<feature type="coiled-coil region" evidence="3">
    <location>
        <begin position="362"/>
        <end position="389"/>
    </location>
</feature>
<feature type="compositionally biased region" description="Basic residues" evidence="5">
    <location>
        <begin position="138"/>
        <end position="149"/>
    </location>
</feature>
<feature type="active site" evidence="3">
    <location>
        <position position="308"/>
    </location>
</feature>
<feature type="active site" evidence="3">
    <location>
        <position position="688"/>
    </location>
</feature>
<feature type="binding site" evidence="2">
    <location>
        <position position="9"/>
    </location>
    <ligand>
        <name>Zn(2+)</name>
        <dbReference type="ChEBI" id="CHEBI:29105"/>
        <label>1</label>
    </ligand>
</feature>
<feature type="binding site" evidence="2">
    <location>
        <position position="12"/>
    </location>
    <ligand>
        <name>Zn(2+)</name>
        <dbReference type="ChEBI" id="CHEBI:29105"/>
        <label>1</label>
    </ligand>
</feature>
<feature type="binding site" evidence="2">
    <location>
        <position position="20"/>
    </location>
    <ligand>
        <name>Zn(2+)</name>
        <dbReference type="ChEBI" id="CHEBI:29105"/>
        <label>2</label>
    </ligand>
</feature>
<feature type="binding site" evidence="2">
    <location>
        <position position="23"/>
    </location>
    <ligand>
        <name>Zn(2+)</name>
        <dbReference type="ChEBI" id="CHEBI:29105"/>
        <label>2</label>
    </ligand>
</feature>
<feature type="binding site" evidence="2">
    <location>
        <position position="28"/>
    </location>
    <ligand>
        <name>Zn(2+)</name>
        <dbReference type="ChEBI" id="CHEBI:29105"/>
        <label>1</label>
    </ligand>
</feature>
<feature type="binding site" evidence="2">
    <location>
        <position position="31"/>
    </location>
    <ligand>
        <name>Zn(2+)</name>
        <dbReference type="ChEBI" id="CHEBI:29105"/>
        <label>1</label>
    </ligand>
</feature>
<feature type="binding site" evidence="2">
    <location>
        <position position="43"/>
    </location>
    <ligand>
        <name>Zn(2+)</name>
        <dbReference type="ChEBI" id="CHEBI:29105"/>
        <label>2</label>
    </ligand>
</feature>
<feature type="binding site" evidence="2">
    <location>
        <position position="46"/>
    </location>
    <ligand>
        <name>Zn(2+)</name>
        <dbReference type="ChEBI" id="CHEBI:29105"/>
        <label>2</label>
    </ligand>
</feature>
<feature type="binding site" evidence="1">
    <location>
        <position position="272"/>
    </location>
    <ligand>
        <name>UDP-alpha-D-glucose</name>
        <dbReference type="ChEBI" id="CHEBI:58885"/>
    </ligand>
</feature>
<feature type="binding site" evidence="1">
    <location>
        <position position="278"/>
    </location>
    <ligand>
        <name>UDP-alpha-D-glucose</name>
        <dbReference type="ChEBI" id="CHEBI:58885"/>
    </ligand>
</feature>
<feature type="binding site" evidence="1">
    <location>
        <position position="279"/>
    </location>
    <ligand>
        <name>UDP-alpha-D-glucose</name>
        <dbReference type="ChEBI" id="CHEBI:58885"/>
    </ligand>
</feature>
<feature type="binding site" evidence="1">
    <location>
        <position position="308"/>
    </location>
    <ligand>
        <name>UDP-alpha-D-glucose</name>
        <dbReference type="ChEBI" id="CHEBI:58885"/>
    </ligand>
</feature>
<feature type="binding site" evidence="1">
    <location>
        <position position="449"/>
    </location>
    <ligand>
        <name>UDP-alpha-D-glucose</name>
        <dbReference type="ChEBI" id="CHEBI:58885"/>
    </ligand>
</feature>
<feature type="binding site" evidence="1">
    <location>
        <position position="450"/>
    </location>
    <ligand>
        <name>Mn(2+)</name>
        <dbReference type="ChEBI" id="CHEBI:29035"/>
    </ligand>
</feature>
<feature type="binding site" evidence="1">
    <location>
        <position position="474"/>
    </location>
    <ligand>
        <name>Mn(2+)</name>
        <dbReference type="ChEBI" id="CHEBI:29035"/>
    </ligand>
</feature>
<feature type="glycosylation site" description="N-linked (GlcNAc...) asparagine" evidence="4">
    <location>
        <position position="862"/>
    </location>
</feature>
<organism>
    <name type="scientific">Oryza sativa subsp. indica</name>
    <name type="common">Rice</name>
    <dbReference type="NCBI Taxonomy" id="39946"/>
    <lineage>
        <taxon>Eukaryota</taxon>
        <taxon>Viridiplantae</taxon>
        <taxon>Streptophyta</taxon>
        <taxon>Embryophyta</taxon>
        <taxon>Tracheophyta</taxon>
        <taxon>Spermatophyta</taxon>
        <taxon>Magnoliopsida</taxon>
        <taxon>Liliopsida</taxon>
        <taxon>Poales</taxon>
        <taxon>Poaceae</taxon>
        <taxon>BOP clade</taxon>
        <taxon>Oryzoideae</taxon>
        <taxon>Oryzeae</taxon>
        <taxon>Oryzinae</taxon>
        <taxon>Oryza</taxon>
        <taxon>Oryza sativa</taxon>
    </lineage>
</organism>